<evidence type="ECO:0000255" key="1">
    <source>
        <dbReference type="HAMAP-Rule" id="MF_00219"/>
    </source>
</evidence>
<keyword id="KW-0378">Hydrolase</keyword>
<keyword id="KW-0479">Metal-binding</keyword>
<keyword id="KW-0665">Pyrimidine biosynthesis</keyword>
<keyword id="KW-1185">Reference proteome</keyword>
<keyword id="KW-0862">Zinc</keyword>
<dbReference type="EC" id="3.5.2.3" evidence="1"/>
<dbReference type="EMBL" id="CP000133">
    <property type="protein sequence ID" value="ABC89290.1"/>
    <property type="molecule type" value="Genomic_DNA"/>
</dbReference>
<dbReference type="RefSeq" id="WP_011423847.1">
    <property type="nucleotide sequence ID" value="NC_007761.1"/>
</dbReference>
<dbReference type="SMR" id="Q2KCZ6"/>
<dbReference type="KEGG" id="ret:RHE_CH00469"/>
<dbReference type="eggNOG" id="COG0418">
    <property type="taxonomic scope" value="Bacteria"/>
</dbReference>
<dbReference type="HOGENOM" id="CLU_041558_1_0_5"/>
<dbReference type="OrthoDB" id="9808095at2"/>
<dbReference type="UniPathway" id="UPA00070">
    <property type="reaction ID" value="UER00117"/>
</dbReference>
<dbReference type="Proteomes" id="UP000001936">
    <property type="component" value="Chromosome"/>
</dbReference>
<dbReference type="GO" id="GO:0005829">
    <property type="term" value="C:cytosol"/>
    <property type="evidence" value="ECO:0007669"/>
    <property type="project" value="TreeGrafter"/>
</dbReference>
<dbReference type="GO" id="GO:0004151">
    <property type="term" value="F:dihydroorotase activity"/>
    <property type="evidence" value="ECO:0007669"/>
    <property type="project" value="UniProtKB-UniRule"/>
</dbReference>
<dbReference type="GO" id="GO:0008270">
    <property type="term" value="F:zinc ion binding"/>
    <property type="evidence" value="ECO:0007669"/>
    <property type="project" value="UniProtKB-UniRule"/>
</dbReference>
<dbReference type="GO" id="GO:0006207">
    <property type="term" value="P:'de novo' pyrimidine nucleobase biosynthetic process"/>
    <property type="evidence" value="ECO:0007669"/>
    <property type="project" value="TreeGrafter"/>
</dbReference>
<dbReference type="GO" id="GO:0044205">
    <property type="term" value="P:'de novo' UMP biosynthetic process"/>
    <property type="evidence" value="ECO:0007669"/>
    <property type="project" value="UniProtKB-UniRule"/>
</dbReference>
<dbReference type="CDD" id="cd01294">
    <property type="entry name" value="DHOase"/>
    <property type="match status" value="1"/>
</dbReference>
<dbReference type="Gene3D" id="3.20.20.140">
    <property type="entry name" value="Metal-dependent hydrolases"/>
    <property type="match status" value="1"/>
</dbReference>
<dbReference type="HAMAP" id="MF_00219">
    <property type="entry name" value="PyrC_classII"/>
    <property type="match status" value="1"/>
</dbReference>
<dbReference type="InterPro" id="IPR006680">
    <property type="entry name" value="Amidohydro-rel"/>
</dbReference>
<dbReference type="InterPro" id="IPR004721">
    <property type="entry name" value="DHOdimr"/>
</dbReference>
<dbReference type="InterPro" id="IPR002195">
    <property type="entry name" value="Dihydroorotase_CS"/>
</dbReference>
<dbReference type="InterPro" id="IPR032466">
    <property type="entry name" value="Metal_Hydrolase"/>
</dbReference>
<dbReference type="NCBIfam" id="TIGR00856">
    <property type="entry name" value="pyrC_dimer"/>
    <property type="match status" value="1"/>
</dbReference>
<dbReference type="PANTHER" id="PTHR43137">
    <property type="entry name" value="DIHYDROOROTASE"/>
    <property type="match status" value="1"/>
</dbReference>
<dbReference type="PANTHER" id="PTHR43137:SF1">
    <property type="entry name" value="DIHYDROOROTASE"/>
    <property type="match status" value="1"/>
</dbReference>
<dbReference type="Pfam" id="PF01979">
    <property type="entry name" value="Amidohydro_1"/>
    <property type="match status" value="1"/>
</dbReference>
<dbReference type="PIRSF" id="PIRSF001237">
    <property type="entry name" value="DHOdimr"/>
    <property type="match status" value="1"/>
</dbReference>
<dbReference type="SUPFAM" id="SSF51556">
    <property type="entry name" value="Metallo-dependent hydrolases"/>
    <property type="match status" value="1"/>
</dbReference>
<dbReference type="PROSITE" id="PS00482">
    <property type="entry name" value="DIHYDROOROTASE_1"/>
    <property type="match status" value="1"/>
</dbReference>
<dbReference type="PROSITE" id="PS00483">
    <property type="entry name" value="DIHYDROOROTASE_2"/>
    <property type="match status" value="1"/>
</dbReference>
<name>PYRC_RHIEC</name>
<sequence>MQSITIRRPDDWHLHLRDGAILEGVIADTSRTFARAIIMPNLVPPVVTTADAKAYRERILKALPDGHRFQPLMTLYLTEQTSPDDVEAGAASGLITAVKLYPAGATTNSHGGVRDMEKAMPVLERMAKIGLPLCVHGEVTTPDVDIFDREAVFIDTVLDPLRRRLPELKVTMEHVTTAGGIDYIKAAQGNLAGSITTHHLIINRNAILVGGIRPHYYCLPVAKRENHRLALRAAAVSGDPRFFLGTDSAPHVDPLKECACGCAGIYTSINTMSCLAHVFEEEGALDRLEAFASLNGPAWYGLSPNEERITLSKQADPVVFPAKIETGAGAVTVFDPMVPLHWQVSASA</sequence>
<comment type="function">
    <text evidence="1">Catalyzes the reversible cyclization of carbamoyl aspartate to dihydroorotate.</text>
</comment>
<comment type="catalytic activity">
    <reaction evidence="1">
        <text>(S)-dihydroorotate + H2O = N-carbamoyl-L-aspartate + H(+)</text>
        <dbReference type="Rhea" id="RHEA:24296"/>
        <dbReference type="ChEBI" id="CHEBI:15377"/>
        <dbReference type="ChEBI" id="CHEBI:15378"/>
        <dbReference type="ChEBI" id="CHEBI:30864"/>
        <dbReference type="ChEBI" id="CHEBI:32814"/>
        <dbReference type="EC" id="3.5.2.3"/>
    </reaction>
</comment>
<comment type="cofactor">
    <cofactor evidence="1">
        <name>Zn(2+)</name>
        <dbReference type="ChEBI" id="CHEBI:29105"/>
    </cofactor>
    <text evidence="1">Binds 2 Zn(2+) ions per subunit.</text>
</comment>
<comment type="pathway">
    <text evidence="1">Pyrimidine metabolism; UMP biosynthesis via de novo pathway; (S)-dihydroorotate from bicarbonate: step 3/3.</text>
</comment>
<comment type="subunit">
    <text evidence="1">Homodimer.</text>
</comment>
<comment type="similarity">
    <text evidence="1">Belongs to the metallo-dependent hydrolases superfamily. DHOase family. Class II DHOase subfamily.</text>
</comment>
<protein>
    <recommendedName>
        <fullName evidence="1">Dihydroorotase</fullName>
        <shortName evidence="1">DHOase</shortName>
        <ecNumber evidence="1">3.5.2.3</ecNumber>
    </recommendedName>
</protein>
<proteinExistence type="inferred from homology"/>
<organism>
    <name type="scientific">Rhizobium etli (strain ATCC 51251 / DSM 11541 / JCM 21823 / NBRC 15573 / CFN 42)</name>
    <dbReference type="NCBI Taxonomy" id="347834"/>
    <lineage>
        <taxon>Bacteria</taxon>
        <taxon>Pseudomonadati</taxon>
        <taxon>Pseudomonadota</taxon>
        <taxon>Alphaproteobacteria</taxon>
        <taxon>Hyphomicrobiales</taxon>
        <taxon>Rhizobiaceae</taxon>
        <taxon>Rhizobium/Agrobacterium group</taxon>
        <taxon>Rhizobium</taxon>
    </lineage>
</organism>
<feature type="chain" id="PRO_1000024044" description="Dihydroorotase">
    <location>
        <begin position="1"/>
        <end position="348"/>
    </location>
</feature>
<feature type="active site" evidence="1">
    <location>
        <position position="247"/>
    </location>
</feature>
<feature type="binding site" evidence="1">
    <location>
        <position position="13"/>
    </location>
    <ligand>
        <name>Zn(2+)</name>
        <dbReference type="ChEBI" id="CHEBI:29105"/>
        <label>1</label>
    </ligand>
</feature>
<feature type="binding site" evidence="1">
    <location>
        <begin position="15"/>
        <end position="17"/>
    </location>
    <ligand>
        <name>substrate</name>
    </ligand>
</feature>
<feature type="binding site" evidence="1">
    <location>
        <position position="15"/>
    </location>
    <ligand>
        <name>Zn(2+)</name>
        <dbReference type="ChEBI" id="CHEBI:29105"/>
        <label>1</label>
    </ligand>
</feature>
<feature type="binding site" evidence="1">
    <location>
        <position position="41"/>
    </location>
    <ligand>
        <name>substrate</name>
    </ligand>
</feature>
<feature type="binding site" description="via carbamate group" evidence="1">
    <location>
        <position position="99"/>
    </location>
    <ligand>
        <name>Zn(2+)</name>
        <dbReference type="ChEBI" id="CHEBI:29105"/>
        <label>1</label>
    </ligand>
</feature>
<feature type="binding site" description="via carbamate group" evidence="1">
    <location>
        <position position="99"/>
    </location>
    <ligand>
        <name>Zn(2+)</name>
        <dbReference type="ChEBI" id="CHEBI:29105"/>
        <label>2</label>
    </ligand>
</feature>
<feature type="binding site" evidence="1">
    <location>
        <position position="136"/>
    </location>
    <ligand>
        <name>substrate</name>
    </ligand>
</feature>
<feature type="binding site" evidence="1">
    <location>
        <position position="136"/>
    </location>
    <ligand>
        <name>Zn(2+)</name>
        <dbReference type="ChEBI" id="CHEBI:29105"/>
        <label>2</label>
    </ligand>
</feature>
<feature type="binding site" evidence="1">
    <location>
        <position position="174"/>
    </location>
    <ligand>
        <name>Zn(2+)</name>
        <dbReference type="ChEBI" id="CHEBI:29105"/>
        <label>2</label>
    </ligand>
</feature>
<feature type="binding site" evidence="1">
    <location>
        <position position="219"/>
    </location>
    <ligand>
        <name>substrate</name>
    </ligand>
</feature>
<feature type="binding site" evidence="1">
    <location>
        <position position="247"/>
    </location>
    <ligand>
        <name>Zn(2+)</name>
        <dbReference type="ChEBI" id="CHEBI:29105"/>
        <label>1</label>
    </ligand>
</feature>
<feature type="binding site" evidence="1">
    <location>
        <position position="251"/>
    </location>
    <ligand>
        <name>substrate</name>
    </ligand>
</feature>
<feature type="binding site" evidence="1">
    <location>
        <position position="263"/>
    </location>
    <ligand>
        <name>substrate</name>
    </ligand>
</feature>
<feature type="modified residue" description="N6-carboxylysine" evidence="1">
    <location>
        <position position="99"/>
    </location>
</feature>
<gene>
    <name evidence="1" type="primary">pyrC</name>
    <name type="ordered locus">RHE_CH00469</name>
</gene>
<accession>Q2KCZ6</accession>
<reference key="1">
    <citation type="journal article" date="2006" name="Proc. Natl. Acad. Sci. U.S.A.">
        <title>The partitioned Rhizobium etli genome: genetic and metabolic redundancy in seven interacting replicons.</title>
        <authorList>
            <person name="Gonzalez V."/>
            <person name="Santamaria R.I."/>
            <person name="Bustos P."/>
            <person name="Hernandez-Gonzalez I."/>
            <person name="Medrano-Soto A."/>
            <person name="Moreno-Hagelsieb G."/>
            <person name="Janga S.C."/>
            <person name="Ramirez M.A."/>
            <person name="Jimenez-Jacinto V."/>
            <person name="Collado-Vides J."/>
            <person name="Davila G."/>
        </authorList>
    </citation>
    <scope>NUCLEOTIDE SEQUENCE [LARGE SCALE GENOMIC DNA]</scope>
    <source>
        <strain>ATCC 51251 / DSM 11541 / JCM 21823 / NBRC 15573 / CFN 42</strain>
    </source>
</reference>